<gene>
    <name evidence="1" type="primary">rpsJ</name>
</gene>
<name>RS10_BRAPL</name>
<dbReference type="EMBL" id="AF114845">
    <property type="protein sequence ID" value="AAG27263.1"/>
    <property type="molecule type" value="Genomic_DNA"/>
</dbReference>
<dbReference type="RefSeq" id="WP_013243971.1">
    <property type="nucleotide sequence ID" value="NZ_VYIY01000003.1"/>
</dbReference>
<dbReference type="SMR" id="Q9FA05"/>
<dbReference type="GeneID" id="56439592"/>
<dbReference type="OMA" id="VDIEIKM"/>
<dbReference type="OrthoDB" id="9804464at2"/>
<dbReference type="GO" id="GO:1990904">
    <property type="term" value="C:ribonucleoprotein complex"/>
    <property type="evidence" value="ECO:0007669"/>
    <property type="project" value="UniProtKB-KW"/>
</dbReference>
<dbReference type="GO" id="GO:0005840">
    <property type="term" value="C:ribosome"/>
    <property type="evidence" value="ECO:0007669"/>
    <property type="project" value="UniProtKB-KW"/>
</dbReference>
<dbReference type="GO" id="GO:0003735">
    <property type="term" value="F:structural constituent of ribosome"/>
    <property type="evidence" value="ECO:0007669"/>
    <property type="project" value="InterPro"/>
</dbReference>
<dbReference type="GO" id="GO:0000049">
    <property type="term" value="F:tRNA binding"/>
    <property type="evidence" value="ECO:0007669"/>
    <property type="project" value="UniProtKB-UniRule"/>
</dbReference>
<dbReference type="GO" id="GO:0006412">
    <property type="term" value="P:translation"/>
    <property type="evidence" value="ECO:0007669"/>
    <property type="project" value="UniProtKB-UniRule"/>
</dbReference>
<dbReference type="FunFam" id="3.30.70.600:FF:000003">
    <property type="entry name" value="30S ribosomal protein S10"/>
    <property type="match status" value="1"/>
</dbReference>
<dbReference type="Gene3D" id="3.30.70.600">
    <property type="entry name" value="Ribosomal protein S10 domain"/>
    <property type="match status" value="1"/>
</dbReference>
<dbReference type="HAMAP" id="MF_00508">
    <property type="entry name" value="Ribosomal_uS10"/>
    <property type="match status" value="1"/>
</dbReference>
<dbReference type="InterPro" id="IPR001848">
    <property type="entry name" value="Ribosomal_uS10"/>
</dbReference>
<dbReference type="InterPro" id="IPR018268">
    <property type="entry name" value="Ribosomal_uS10_CS"/>
</dbReference>
<dbReference type="InterPro" id="IPR027486">
    <property type="entry name" value="Ribosomal_uS10_dom"/>
</dbReference>
<dbReference type="InterPro" id="IPR036838">
    <property type="entry name" value="Ribosomal_uS10_dom_sf"/>
</dbReference>
<dbReference type="NCBIfam" id="NF001861">
    <property type="entry name" value="PRK00596.1"/>
    <property type="match status" value="1"/>
</dbReference>
<dbReference type="NCBIfam" id="TIGR01049">
    <property type="entry name" value="rpsJ_bact"/>
    <property type="match status" value="1"/>
</dbReference>
<dbReference type="PANTHER" id="PTHR11700">
    <property type="entry name" value="30S RIBOSOMAL PROTEIN S10 FAMILY MEMBER"/>
    <property type="match status" value="1"/>
</dbReference>
<dbReference type="Pfam" id="PF00338">
    <property type="entry name" value="Ribosomal_S10"/>
    <property type="match status" value="1"/>
</dbReference>
<dbReference type="PRINTS" id="PR00971">
    <property type="entry name" value="RIBOSOMALS10"/>
</dbReference>
<dbReference type="SMART" id="SM01403">
    <property type="entry name" value="Ribosomal_S10"/>
    <property type="match status" value="1"/>
</dbReference>
<dbReference type="SUPFAM" id="SSF54999">
    <property type="entry name" value="Ribosomal protein S10"/>
    <property type="match status" value="1"/>
</dbReference>
<dbReference type="PROSITE" id="PS00361">
    <property type="entry name" value="RIBOSOMAL_S10"/>
    <property type="match status" value="1"/>
</dbReference>
<reference key="1">
    <citation type="submission" date="1998-12" db="EMBL/GenBank/DDBJ databases">
        <title>A gene cluster of ribosomal proteins in Brachyspira pilosicoli.</title>
        <authorList>
            <person name="Rayment S.J."/>
            <person name="Livesley M.A."/>
        </authorList>
    </citation>
    <scope>NUCLEOTIDE SEQUENCE [GENOMIC DNA]</scope>
    <source>
        <strain>ATCC 51139 / P43/6/78</strain>
    </source>
</reference>
<keyword id="KW-0687">Ribonucleoprotein</keyword>
<keyword id="KW-0689">Ribosomal protein</keyword>
<feature type="chain" id="PRO_0000146506" description="Small ribosomal subunit protein uS10">
    <location>
        <begin position="1"/>
        <end position="101"/>
    </location>
</feature>
<proteinExistence type="inferred from homology"/>
<sequence length="101" mass="11368">MKEQKIRVKLKAFDIELIDQSAQSIVASVKKTGARVSGPIPLPTSIRKVTVIRSPHVNIKSREQFEMRVYKRLIDIFDVTPQTTESLKKLALPAGVDVQLK</sequence>
<evidence type="ECO:0000255" key="1">
    <source>
        <dbReference type="HAMAP-Rule" id="MF_00508"/>
    </source>
</evidence>
<evidence type="ECO:0000305" key="2"/>
<protein>
    <recommendedName>
        <fullName evidence="1">Small ribosomal subunit protein uS10</fullName>
    </recommendedName>
    <alternativeName>
        <fullName evidence="2">30S ribosomal protein S10</fullName>
    </alternativeName>
</protein>
<comment type="function">
    <text evidence="1">Involved in the binding of tRNA to the ribosomes.</text>
</comment>
<comment type="subunit">
    <text evidence="1">Part of the 30S ribosomal subunit.</text>
</comment>
<comment type="similarity">
    <text evidence="1">Belongs to the universal ribosomal protein uS10 family.</text>
</comment>
<accession>Q9FA05</accession>
<organism>
    <name type="scientific">Brachyspira pilosicoli</name>
    <name type="common">Serpulina pilosicoli</name>
    <dbReference type="NCBI Taxonomy" id="52584"/>
    <lineage>
        <taxon>Bacteria</taxon>
        <taxon>Pseudomonadati</taxon>
        <taxon>Spirochaetota</taxon>
        <taxon>Spirochaetia</taxon>
        <taxon>Brachyspirales</taxon>
        <taxon>Brachyspiraceae</taxon>
        <taxon>Brachyspira</taxon>
    </lineage>
</organism>